<evidence type="ECO:0000250" key="1"/>
<evidence type="ECO:0000256" key="2">
    <source>
        <dbReference type="SAM" id="MobiDB-lite"/>
    </source>
</evidence>
<evidence type="ECO:0000305" key="3"/>
<protein>
    <recommendedName>
        <fullName>Probable DNA-directed RNA polymerases I and III subunit RPAC2</fullName>
        <shortName>RNA polymerases I and III subunit AC2</shortName>
    </recommendedName>
    <alternativeName>
        <fullName>AC19</fullName>
    </alternativeName>
    <alternativeName>
        <fullName>DNA-directed RNA polymerase I subunit D</fullName>
    </alternativeName>
</protein>
<organism>
    <name type="scientific">Caenorhabditis briggsae</name>
    <dbReference type="NCBI Taxonomy" id="6238"/>
    <lineage>
        <taxon>Eukaryota</taxon>
        <taxon>Metazoa</taxon>
        <taxon>Ecdysozoa</taxon>
        <taxon>Nematoda</taxon>
        <taxon>Chromadorea</taxon>
        <taxon>Rhabditida</taxon>
        <taxon>Rhabditina</taxon>
        <taxon>Rhabditomorpha</taxon>
        <taxon>Rhabditoidea</taxon>
        <taxon>Rhabditidae</taxon>
        <taxon>Peloderinae</taxon>
        <taxon>Caenorhabditis</taxon>
    </lineage>
</organism>
<proteinExistence type="inferred from homology"/>
<feature type="chain" id="PRO_0000232466" description="Probable DNA-directed RNA polymerases I and III subunit RPAC2">
    <location>
        <begin position="1"/>
        <end position="145"/>
    </location>
</feature>
<feature type="region of interest" description="Disordered" evidence="2">
    <location>
        <begin position="1"/>
        <end position="52"/>
    </location>
</feature>
<feature type="compositionally biased region" description="Acidic residues" evidence="2">
    <location>
        <begin position="12"/>
        <end position="39"/>
    </location>
</feature>
<comment type="function">
    <text evidence="1">DNA-dependent RNA polymerase catalyzes the transcription of DNA into RNA using the four ribonucleoside triphosphates as substrates. Common core component of RNA polymerases I and III which synthesize ribosomal RNA precursors and small RNAs, such as 5S rRNA and tRNAs, respectively (By similarity).</text>
</comment>
<comment type="subunit">
    <text evidence="1">Component of the RNA polymerase I (Pol I) and RNA polymerase III (Pol III) complexes consisting of at least 13 and 17 subunits, respectively.</text>
</comment>
<comment type="subcellular location">
    <subcellularLocation>
        <location evidence="1">Nucleus</location>
    </subcellularLocation>
</comment>
<comment type="similarity">
    <text evidence="3">Belongs to the archaeal Rpo11/eukaryotic RPB11/RPC19 RNA polymerase subunit family.</text>
</comment>
<name>RPAC2_CAEBR</name>
<sequence length="145" mass="16565">MGKKSEKKVVEETMEVDEQPAVEPEAVPEEEPEVEDEDLNVPKKKKMEILDPKSFEQDPSNLTLILYEEDHTIGNSIKHILSRMDEVEFCGYNVPHPLEDKILFRVQTKDGINALEVLVKAFESVEQVFSTIRGKFEAAYEKSIA</sequence>
<accession>Q61IX2</accession>
<accession>A8XA83</accession>
<reference key="1">
    <citation type="journal article" date="2003" name="PLoS Biol.">
        <title>The genome sequence of Caenorhabditis briggsae: a platform for comparative genomics.</title>
        <authorList>
            <person name="Stein L.D."/>
            <person name="Bao Z."/>
            <person name="Blasiar D."/>
            <person name="Blumenthal T."/>
            <person name="Brent M.R."/>
            <person name="Chen N."/>
            <person name="Chinwalla A."/>
            <person name="Clarke L."/>
            <person name="Clee C."/>
            <person name="Coghlan A."/>
            <person name="Coulson A."/>
            <person name="D'Eustachio P."/>
            <person name="Fitch D.H.A."/>
            <person name="Fulton L.A."/>
            <person name="Fulton R.E."/>
            <person name="Griffiths-Jones S."/>
            <person name="Harris T.W."/>
            <person name="Hillier L.W."/>
            <person name="Kamath R."/>
            <person name="Kuwabara P.E."/>
            <person name="Mardis E.R."/>
            <person name="Marra M.A."/>
            <person name="Miner T.L."/>
            <person name="Minx P."/>
            <person name="Mullikin J.C."/>
            <person name="Plumb R.W."/>
            <person name="Rogers J."/>
            <person name="Schein J.E."/>
            <person name="Sohrmann M."/>
            <person name="Spieth J."/>
            <person name="Stajich J.E."/>
            <person name="Wei C."/>
            <person name="Willey D."/>
            <person name="Wilson R.K."/>
            <person name="Durbin R.M."/>
            <person name="Waterston R.H."/>
        </authorList>
    </citation>
    <scope>NUCLEOTIDE SEQUENCE [LARGE SCALE GENOMIC DNA]</scope>
    <source>
        <strain>AF16</strain>
    </source>
</reference>
<dbReference type="EMBL" id="HE601459">
    <property type="protein sequence ID" value="CAP29551.1"/>
    <property type="molecule type" value="Genomic_DNA"/>
</dbReference>
<dbReference type="RefSeq" id="XP_002641702.1">
    <property type="nucleotide sequence ID" value="XM_002641656.1"/>
</dbReference>
<dbReference type="SMR" id="Q61IX2"/>
<dbReference type="FunCoup" id="Q61IX2">
    <property type="interactions" value="1645"/>
</dbReference>
<dbReference type="STRING" id="6238.Q61IX2"/>
<dbReference type="EnsemblMetazoa" id="CBG10036.1">
    <property type="protein sequence ID" value="CBG10036.1"/>
    <property type="gene ID" value="WBGene00031520"/>
</dbReference>
<dbReference type="GeneID" id="8583696"/>
<dbReference type="KEGG" id="cbr:CBG_10036"/>
<dbReference type="CTD" id="8583696"/>
<dbReference type="WormBase" id="CBG10036">
    <property type="protein sequence ID" value="CBP16773"/>
    <property type="gene ID" value="WBGene00031520"/>
    <property type="gene designation" value="Cbr-rpac-19"/>
</dbReference>
<dbReference type="eggNOG" id="KOG3438">
    <property type="taxonomic scope" value="Eukaryota"/>
</dbReference>
<dbReference type="HOGENOM" id="CLU_090381_3_0_1"/>
<dbReference type="InParanoid" id="Q61IX2"/>
<dbReference type="OMA" id="MRIQMYD"/>
<dbReference type="Proteomes" id="UP000008549">
    <property type="component" value="Unassembled WGS sequence"/>
</dbReference>
<dbReference type="GO" id="GO:0005736">
    <property type="term" value="C:RNA polymerase I complex"/>
    <property type="evidence" value="ECO:0000318"/>
    <property type="project" value="GO_Central"/>
</dbReference>
<dbReference type="GO" id="GO:0005666">
    <property type="term" value="C:RNA polymerase III complex"/>
    <property type="evidence" value="ECO:0000318"/>
    <property type="project" value="GO_Central"/>
</dbReference>
<dbReference type="GO" id="GO:0003677">
    <property type="term" value="F:DNA binding"/>
    <property type="evidence" value="ECO:0007669"/>
    <property type="project" value="InterPro"/>
</dbReference>
<dbReference type="GO" id="GO:0003899">
    <property type="term" value="F:DNA-directed RNA polymerase activity"/>
    <property type="evidence" value="ECO:0007669"/>
    <property type="project" value="InterPro"/>
</dbReference>
<dbReference type="GO" id="GO:0046983">
    <property type="term" value="F:protein dimerization activity"/>
    <property type="evidence" value="ECO:0007669"/>
    <property type="project" value="InterPro"/>
</dbReference>
<dbReference type="GO" id="GO:0006383">
    <property type="term" value="P:transcription by RNA polymerase III"/>
    <property type="evidence" value="ECO:0000318"/>
    <property type="project" value="GO_Central"/>
</dbReference>
<dbReference type="GO" id="GO:0006362">
    <property type="term" value="P:transcription elongation by RNA polymerase I"/>
    <property type="evidence" value="ECO:0000318"/>
    <property type="project" value="GO_Central"/>
</dbReference>
<dbReference type="CDD" id="cd07029">
    <property type="entry name" value="RNAP_I_III_AC19"/>
    <property type="match status" value="1"/>
</dbReference>
<dbReference type="FunFam" id="3.30.1360.10:FF:000025">
    <property type="entry name" value="Probable DNA-directed RNA polymerases I and III subunit RPAC2"/>
    <property type="match status" value="1"/>
</dbReference>
<dbReference type="Gene3D" id="3.30.1360.10">
    <property type="entry name" value="RNA polymerase, RBP11-like subunit"/>
    <property type="match status" value="1"/>
</dbReference>
<dbReference type="HAMAP" id="MF_00261">
    <property type="entry name" value="RNApol_arch_Rpo11"/>
    <property type="match status" value="1"/>
</dbReference>
<dbReference type="InterPro" id="IPR036603">
    <property type="entry name" value="RBP11-like"/>
</dbReference>
<dbReference type="InterPro" id="IPR009025">
    <property type="entry name" value="RBP11-like_dimer"/>
</dbReference>
<dbReference type="InterPro" id="IPR008193">
    <property type="entry name" value="RNA_pol_Rpb11_13-16kDa_CS"/>
</dbReference>
<dbReference type="InterPro" id="IPR033898">
    <property type="entry name" value="RNAP_AC19"/>
</dbReference>
<dbReference type="InterPro" id="IPR022905">
    <property type="entry name" value="Rpo11-like"/>
</dbReference>
<dbReference type="PANTHER" id="PTHR13946">
    <property type="entry name" value="DNA-DIRECTED RNA POLYMERASE I,II,III"/>
    <property type="match status" value="1"/>
</dbReference>
<dbReference type="PANTHER" id="PTHR13946:SF28">
    <property type="entry name" value="DNA-DIRECTED RNA POLYMERASES I AND III SUBUNIT RPAC2"/>
    <property type="match status" value="1"/>
</dbReference>
<dbReference type="Pfam" id="PF13656">
    <property type="entry name" value="RNA_pol_L_2"/>
    <property type="match status" value="1"/>
</dbReference>
<dbReference type="SUPFAM" id="SSF55257">
    <property type="entry name" value="RBP11-like subunits of RNA polymerase"/>
    <property type="match status" value="1"/>
</dbReference>
<dbReference type="PROSITE" id="PS01154">
    <property type="entry name" value="RNA_POL_L_13KD"/>
    <property type="match status" value="1"/>
</dbReference>
<gene>
    <name type="primary">rpac-19</name>
    <name type="ORF">CBG10036</name>
</gene>
<keyword id="KW-0240">DNA-directed RNA polymerase</keyword>
<keyword id="KW-0539">Nucleus</keyword>
<keyword id="KW-1185">Reference proteome</keyword>
<keyword id="KW-0804">Transcription</keyword>